<dbReference type="EC" id="2.7.7.3" evidence="1"/>
<dbReference type="EMBL" id="CP000570">
    <property type="protein sequence ID" value="ABN81596.1"/>
    <property type="molecule type" value="Genomic_DNA"/>
</dbReference>
<dbReference type="RefSeq" id="WP_004195249.1">
    <property type="nucleotide sequence ID" value="NC_009074.1"/>
</dbReference>
<dbReference type="SMR" id="A3N5J6"/>
<dbReference type="GeneID" id="93059037"/>
<dbReference type="KEGG" id="bpd:BURPS668_0564"/>
<dbReference type="HOGENOM" id="CLU_100149_0_1_4"/>
<dbReference type="UniPathway" id="UPA00241">
    <property type="reaction ID" value="UER00355"/>
</dbReference>
<dbReference type="GO" id="GO:0005737">
    <property type="term" value="C:cytoplasm"/>
    <property type="evidence" value="ECO:0007669"/>
    <property type="project" value="UniProtKB-SubCell"/>
</dbReference>
<dbReference type="GO" id="GO:0005524">
    <property type="term" value="F:ATP binding"/>
    <property type="evidence" value="ECO:0007669"/>
    <property type="project" value="UniProtKB-KW"/>
</dbReference>
<dbReference type="GO" id="GO:0004595">
    <property type="term" value="F:pantetheine-phosphate adenylyltransferase activity"/>
    <property type="evidence" value="ECO:0007669"/>
    <property type="project" value="UniProtKB-UniRule"/>
</dbReference>
<dbReference type="GO" id="GO:0015937">
    <property type="term" value="P:coenzyme A biosynthetic process"/>
    <property type="evidence" value="ECO:0007669"/>
    <property type="project" value="UniProtKB-UniRule"/>
</dbReference>
<dbReference type="CDD" id="cd02163">
    <property type="entry name" value="PPAT"/>
    <property type="match status" value="1"/>
</dbReference>
<dbReference type="Gene3D" id="3.40.50.620">
    <property type="entry name" value="HUPs"/>
    <property type="match status" value="1"/>
</dbReference>
<dbReference type="HAMAP" id="MF_00151">
    <property type="entry name" value="PPAT_bact"/>
    <property type="match status" value="1"/>
</dbReference>
<dbReference type="InterPro" id="IPR004821">
    <property type="entry name" value="Cyt_trans-like"/>
</dbReference>
<dbReference type="InterPro" id="IPR001980">
    <property type="entry name" value="PPAT"/>
</dbReference>
<dbReference type="InterPro" id="IPR014729">
    <property type="entry name" value="Rossmann-like_a/b/a_fold"/>
</dbReference>
<dbReference type="NCBIfam" id="TIGR01510">
    <property type="entry name" value="coaD_prev_kdtB"/>
    <property type="match status" value="1"/>
</dbReference>
<dbReference type="NCBIfam" id="TIGR00125">
    <property type="entry name" value="cyt_tran_rel"/>
    <property type="match status" value="1"/>
</dbReference>
<dbReference type="PANTHER" id="PTHR21342">
    <property type="entry name" value="PHOSPHOPANTETHEINE ADENYLYLTRANSFERASE"/>
    <property type="match status" value="1"/>
</dbReference>
<dbReference type="PANTHER" id="PTHR21342:SF1">
    <property type="entry name" value="PHOSPHOPANTETHEINE ADENYLYLTRANSFERASE"/>
    <property type="match status" value="1"/>
</dbReference>
<dbReference type="Pfam" id="PF01467">
    <property type="entry name" value="CTP_transf_like"/>
    <property type="match status" value="1"/>
</dbReference>
<dbReference type="PRINTS" id="PR01020">
    <property type="entry name" value="LPSBIOSNTHSS"/>
</dbReference>
<dbReference type="SUPFAM" id="SSF52374">
    <property type="entry name" value="Nucleotidylyl transferase"/>
    <property type="match status" value="1"/>
</dbReference>
<sequence>MVVAVYPGTFDPLTRGHEDLVRRASSIFDTLVVGVADSRAKKPFFSLEERLKIANEVLGHYPNVKVMGFTGLLKDFVRANDARVIVRGLRAVSDFEYEFQMAGMNRYLLPDVETMFMTPSDQYQFISGTIVREIAQLGGDVSKFVFPSVEKWLTEKVAAMAQGPSA</sequence>
<feature type="chain" id="PRO_1000011111" description="Phosphopantetheine adenylyltransferase">
    <location>
        <begin position="1"/>
        <end position="166"/>
    </location>
</feature>
<feature type="binding site" evidence="1">
    <location>
        <begin position="9"/>
        <end position="10"/>
    </location>
    <ligand>
        <name>ATP</name>
        <dbReference type="ChEBI" id="CHEBI:30616"/>
    </ligand>
</feature>
<feature type="binding site" evidence="1">
    <location>
        <position position="9"/>
    </location>
    <ligand>
        <name>substrate</name>
    </ligand>
</feature>
<feature type="binding site" evidence="1">
    <location>
        <position position="17"/>
    </location>
    <ligand>
        <name>ATP</name>
        <dbReference type="ChEBI" id="CHEBI:30616"/>
    </ligand>
</feature>
<feature type="binding site" evidence="1">
    <location>
        <position position="41"/>
    </location>
    <ligand>
        <name>substrate</name>
    </ligand>
</feature>
<feature type="binding site" evidence="1">
    <location>
        <position position="73"/>
    </location>
    <ligand>
        <name>substrate</name>
    </ligand>
</feature>
<feature type="binding site" evidence="1">
    <location>
        <position position="87"/>
    </location>
    <ligand>
        <name>substrate</name>
    </ligand>
</feature>
<feature type="binding site" evidence="1">
    <location>
        <begin position="88"/>
        <end position="90"/>
    </location>
    <ligand>
        <name>ATP</name>
        <dbReference type="ChEBI" id="CHEBI:30616"/>
    </ligand>
</feature>
<feature type="binding site" evidence="1">
    <location>
        <position position="98"/>
    </location>
    <ligand>
        <name>ATP</name>
        <dbReference type="ChEBI" id="CHEBI:30616"/>
    </ligand>
</feature>
<feature type="binding site" evidence="1">
    <location>
        <begin position="123"/>
        <end position="129"/>
    </location>
    <ligand>
        <name>ATP</name>
        <dbReference type="ChEBI" id="CHEBI:30616"/>
    </ligand>
</feature>
<feature type="site" description="Transition state stabilizer" evidence="1">
    <location>
        <position position="17"/>
    </location>
</feature>
<name>COAD_BURP6</name>
<gene>
    <name evidence="1" type="primary">coaD</name>
    <name type="ordered locus">BURPS668_0564</name>
</gene>
<comment type="function">
    <text evidence="1">Reversibly transfers an adenylyl group from ATP to 4'-phosphopantetheine, yielding dephospho-CoA (dPCoA) and pyrophosphate.</text>
</comment>
<comment type="catalytic activity">
    <reaction evidence="1">
        <text>(R)-4'-phosphopantetheine + ATP + H(+) = 3'-dephospho-CoA + diphosphate</text>
        <dbReference type="Rhea" id="RHEA:19801"/>
        <dbReference type="ChEBI" id="CHEBI:15378"/>
        <dbReference type="ChEBI" id="CHEBI:30616"/>
        <dbReference type="ChEBI" id="CHEBI:33019"/>
        <dbReference type="ChEBI" id="CHEBI:57328"/>
        <dbReference type="ChEBI" id="CHEBI:61723"/>
        <dbReference type="EC" id="2.7.7.3"/>
    </reaction>
</comment>
<comment type="cofactor">
    <cofactor evidence="1">
        <name>Mg(2+)</name>
        <dbReference type="ChEBI" id="CHEBI:18420"/>
    </cofactor>
</comment>
<comment type="pathway">
    <text evidence="1">Cofactor biosynthesis; coenzyme A biosynthesis; CoA from (R)-pantothenate: step 4/5.</text>
</comment>
<comment type="subunit">
    <text evidence="1">Homohexamer.</text>
</comment>
<comment type="subcellular location">
    <subcellularLocation>
        <location evidence="1">Cytoplasm</location>
    </subcellularLocation>
</comment>
<comment type="similarity">
    <text evidence="1">Belongs to the bacterial CoaD family.</text>
</comment>
<accession>A3N5J6</accession>
<keyword id="KW-0067">ATP-binding</keyword>
<keyword id="KW-0173">Coenzyme A biosynthesis</keyword>
<keyword id="KW-0963">Cytoplasm</keyword>
<keyword id="KW-0460">Magnesium</keyword>
<keyword id="KW-0547">Nucleotide-binding</keyword>
<keyword id="KW-0548">Nucleotidyltransferase</keyword>
<keyword id="KW-0808">Transferase</keyword>
<organism>
    <name type="scientific">Burkholderia pseudomallei (strain 668)</name>
    <dbReference type="NCBI Taxonomy" id="320373"/>
    <lineage>
        <taxon>Bacteria</taxon>
        <taxon>Pseudomonadati</taxon>
        <taxon>Pseudomonadota</taxon>
        <taxon>Betaproteobacteria</taxon>
        <taxon>Burkholderiales</taxon>
        <taxon>Burkholderiaceae</taxon>
        <taxon>Burkholderia</taxon>
        <taxon>pseudomallei group</taxon>
    </lineage>
</organism>
<protein>
    <recommendedName>
        <fullName evidence="1">Phosphopantetheine adenylyltransferase</fullName>
        <ecNumber evidence="1">2.7.7.3</ecNumber>
    </recommendedName>
    <alternativeName>
        <fullName evidence="1">Dephospho-CoA pyrophosphorylase</fullName>
    </alternativeName>
    <alternativeName>
        <fullName evidence="1">Pantetheine-phosphate adenylyltransferase</fullName>
        <shortName evidence="1">PPAT</shortName>
    </alternativeName>
</protein>
<proteinExistence type="inferred from homology"/>
<evidence type="ECO:0000255" key="1">
    <source>
        <dbReference type="HAMAP-Rule" id="MF_00151"/>
    </source>
</evidence>
<reference key="1">
    <citation type="journal article" date="2010" name="Genome Biol. Evol.">
        <title>Continuing evolution of Burkholderia mallei through genome reduction and large-scale rearrangements.</title>
        <authorList>
            <person name="Losada L."/>
            <person name="Ronning C.M."/>
            <person name="DeShazer D."/>
            <person name="Woods D."/>
            <person name="Fedorova N."/>
            <person name="Kim H.S."/>
            <person name="Shabalina S.A."/>
            <person name="Pearson T.R."/>
            <person name="Brinkac L."/>
            <person name="Tan P."/>
            <person name="Nandi T."/>
            <person name="Crabtree J."/>
            <person name="Badger J."/>
            <person name="Beckstrom-Sternberg S."/>
            <person name="Saqib M."/>
            <person name="Schutzer S.E."/>
            <person name="Keim P."/>
            <person name="Nierman W.C."/>
        </authorList>
    </citation>
    <scope>NUCLEOTIDE SEQUENCE [LARGE SCALE GENOMIC DNA]</scope>
    <source>
        <strain>668</strain>
    </source>
</reference>